<evidence type="ECO:0000255" key="1">
    <source>
        <dbReference type="HAMAP-Rule" id="MF_01026"/>
    </source>
</evidence>
<organism>
    <name type="scientific">Aliivibrio fischeri (strain ATCC 700601 / ES114)</name>
    <name type="common">Vibrio fischeri</name>
    <dbReference type="NCBI Taxonomy" id="312309"/>
    <lineage>
        <taxon>Bacteria</taxon>
        <taxon>Pseudomonadati</taxon>
        <taxon>Pseudomonadota</taxon>
        <taxon>Gammaproteobacteria</taxon>
        <taxon>Vibrionales</taxon>
        <taxon>Vibrionaceae</taxon>
        <taxon>Aliivibrio</taxon>
    </lineage>
</organism>
<dbReference type="EC" id="4.2.1.33" evidence="1"/>
<dbReference type="EMBL" id="CP000020">
    <property type="protein sequence ID" value="AAW84788.1"/>
    <property type="molecule type" value="Genomic_DNA"/>
</dbReference>
<dbReference type="RefSeq" id="WP_011261103.1">
    <property type="nucleotide sequence ID" value="NC_006840.2"/>
</dbReference>
<dbReference type="RefSeq" id="YP_203676.1">
    <property type="nucleotide sequence ID" value="NC_006840.2"/>
</dbReference>
<dbReference type="SMR" id="Q5E858"/>
<dbReference type="STRING" id="312309.VF_0293"/>
<dbReference type="DNASU" id="3277251"/>
<dbReference type="EnsemblBacteria" id="AAW84788">
    <property type="protein sequence ID" value="AAW84788"/>
    <property type="gene ID" value="VF_0293"/>
</dbReference>
<dbReference type="GeneID" id="54162913"/>
<dbReference type="KEGG" id="vfi:VF_0293"/>
<dbReference type="PATRIC" id="fig|312309.11.peg.287"/>
<dbReference type="eggNOG" id="COG0065">
    <property type="taxonomic scope" value="Bacteria"/>
</dbReference>
<dbReference type="HOGENOM" id="CLU_006714_3_4_6"/>
<dbReference type="OrthoDB" id="9802769at2"/>
<dbReference type="UniPathway" id="UPA00048">
    <property type="reaction ID" value="UER00071"/>
</dbReference>
<dbReference type="Proteomes" id="UP000000537">
    <property type="component" value="Chromosome I"/>
</dbReference>
<dbReference type="GO" id="GO:0003861">
    <property type="term" value="F:3-isopropylmalate dehydratase activity"/>
    <property type="evidence" value="ECO:0007669"/>
    <property type="project" value="UniProtKB-UniRule"/>
</dbReference>
<dbReference type="GO" id="GO:0051539">
    <property type="term" value="F:4 iron, 4 sulfur cluster binding"/>
    <property type="evidence" value="ECO:0007669"/>
    <property type="project" value="UniProtKB-KW"/>
</dbReference>
<dbReference type="GO" id="GO:0046872">
    <property type="term" value="F:metal ion binding"/>
    <property type="evidence" value="ECO:0007669"/>
    <property type="project" value="UniProtKB-KW"/>
</dbReference>
<dbReference type="GO" id="GO:0009098">
    <property type="term" value="P:L-leucine biosynthetic process"/>
    <property type="evidence" value="ECO:0007669"/>
    <property type="project" value="UniProtKB-UniRule"/>
</dbReference>
<dbReference type="CDD" id="cd01583">
    <property type="entry name" value="IPMI"/>
    <property type="match status" value="1"/>
</dbReference>
<dbReference type="FunFam" id="3.30.499.10:FF:000006">
    <property type="entry name" value="3-isopropylmalate dehydratase large subunit"/>
    <property type="match status" value="1"/>
</dbReference>
<dbReference type="FunFam" id="3.30.499.10:FF:000007">
    <property type="entry name" value="3-isopropylmalate dehydratase large subunit"/>
    <property type="match status" value="1"/>
</dbReference>
<dbReference type="Gene3D" id="3.30.499.10">
    <property type="entry name" value="Aconitase, domain 3"/>
    <property type="match status" value="2"/>
</dbReference>
<dbReference type="HAMAP" id="MF_01026">
    <property type="entry name" value="LeuC_type1"/>
    <property type="match status" value="1"/>
</dbReference>
<dbReference type="InterPro" id="IPR004430">
    <property type="entry name" value="3-IsopropMal_deHydase_lsu"/>
</dbReference>
<dbReference type="InterPro" id="IPR015931">
    <property type="entry name" value="Acnase/IPM_dHydase_lsu_aba_1/3"/>
</dbReference>
<dbReference type="InterPro" id="IPR001030">
    <property type="entry name" value="Acoase/IPM_deHydtase_lsu_aba"/>
</dbReference>
<dbReference type="InterPro" id="IPR018136">
    <property type="entry name" value="Aconitase_4Fe-4S_BS"/>
</dbReference>
<dbReference type="InterPro" id="IPR036008">
    <property type="entry name" value="Aconitase_4Fe-4S_dom"/>
</dbReference>
<dbReference type="InterPro" id="IPR050067">
    <property type="entry name" value="IPM_dehydratase_rel_enz"/>
</dbReference>
<dbReference type="InterPro" id="IPR033941">
    <property type="entry name" value="IPMI_cat"/>
</dbReference>
<dbReference type="NCBIfam" id="TIGR00170">
    <property type="entry name" value="leuC"/>
    <property type="match status" value="1"/>
</dbReference>
<dbReference type="NCBIfam" id="NF004016">
    <property type="entry name" value="PRK05478.1"/>
    <property type="match status" value="1"/>
</dbReference>
<dbReference type="NCBIfam" id="NF009116">
    <property type="entry name" value="PRK12466.1"/>
    <property type="match status" value="1"/>
</dbReference>
<dbReference type="PANTHER" id="PTHR43822:SF9">
    <property type="entry name" value="3-ISOPROPYLMALATE DEHYDRATASE"/>
    <property type="match status" value="1"/>
</dbReference>
<dbReference type="PANTHER" id="PTHR43822">
    <property type="entry name" value="HOMOACONITASE, MITOCHONDRIAL-RELATED"/>
    <property type="match status" value="1"/>
</dbReference>
<dbReference type="Pfam" id="PF00330">
    <property type="entry name" value="Aconitase"/>
    <property type="match status" value="1"/>
</dbReference>
<dbReference type="PRINTS" id="PR00415">
    <property type="entry name" value="ACONITASE"/>
</dbReference>
<dbReference type="SUPFAM" id="SSF53732">
    <property type="entry name" value="Aconitase iron-sulfur domain"/>
    <property type="match status" value="1"/>
</dbReference>
<dbReference type="PROSITE" id="PS00450">
    <property type="entry name" value="ACONITASE_1"/>
    <property type="match status" value="1"/>
</dbReference>
<dbReference type="PROSITE" id="PS01244">
    <property type="entry name" value="ACONITASE_2"/>
    <property type="match status" value="1"/>
</dbReference>
<accession>Q5E858</accession>
<name>LEUC_ALIF1</name>
<proteinExistence type="inferred from homology"/>
<comment type="function">
    <text evidence="1">Catalyzes the isomerization between 2-isopropylmalate and 3-isopropylmalate, via the formation of 2-isopropylmaleate.</text>
</comment>
<comment type="catalytic activity">
    <reaction evidence="1">
        <text>(2R,3S)-3-isopropylmalate = (2S)-2-isopropylmalate</text>
        <dbReference type="Rhea" id="RHEA:32287"/>
        <dbReference type="ChEBI" id="CHEBI:1178"/>
        <dbReference type="ChEBI" id="CHEBI:35121"/>
        <dbReference type="EC" id="4.2.1.33"/>
    </reaction>
</comment>
<comment type="cofactor">
    <cofactor evidence="1">
        <name>[4Fe-4S] cluster</name>
        <dbReference type="ChEBI" id="CHEBI:49883"/>
    </cofactor>
    <text evidence="1">Binds 1 [4Fe-4S] cluster per subunit.</text>
</comment>
<comment type="pathway">
    <text evidence="1">Amino-acid biosynthesis; L-leucine biosynthesis; L-leucine from 3-methyl-2-oxobutanoate: step 2/4.</text>
</comment>
<comment type="subunit">
    <text evidence="1">Heterodimer of LeuC and LeuD.</text>
</comment>
<comment type="similarity">
    <text evidence="1">Belongs to the aconitase/IPM isomerase family. LeuC type 1 subfamily.</text>
</comment>
<gene>
    <name evidence="1" type="primary">leuC</name>
    <name type="ordered locus">VF_0293</name>
</gene>
<sequence>MSNAKTLYEKIYDAHVAVAAEGENPILYIDRHLVHEVTSPQAFDGLREKGRKVRQVGKTFATMDHNVSTQTKDINASGEMARIQMETLSKNCEEFGVTLYDLNHKYQGIVHVMGPELGITLPGMTIVCGDSHTATHGAFGSLAFGIGTSEVEHVLATQTLKQARAKTMKIDVKGKVAEGITAKDIVLAIIGKTTAAGGTGYVVEFCGEAITDLTMEGRMTVCNMAIELGAKAGLIAPDQTTFDYIAGRKFSPQDADLDAAIEYWSSLKTDDDAEFDAVVTLDASEIKPQVTWGTNPGQVIAVDAPIPAPESFADPVEKASAEKALAYMGLEAGKSLSDYNVDKVFVGSCTNSRIEDMRAAAAIAKGRKVASHVQALIVPGSEQVKAQAEKEGLDVIFKEAGFEWRLPGCSMCLAMNNDRLGPHERCASTSNRNFEGRQGRDGRTHLVSPAMAAAAAIAGHFVDIRTITEQA</sequence>
<feature type="chain" id="PRO_0000076837" description="3-isopropylmalate dehydratase large subunit">
    <location>
        <begin position="1"/>
        <end position="471"/>
    </location>
</feature>
<feature type="binding site" evidence="1">
    <location>
        <position position="349"/>
    </location>
    <ligand>
        <name>[4Fe-4S] cluster</name>
        <dbReference type="ChEBI" id="CHEBI:49883"/>
    </ligand>
</feature>
<feature type="binding site" evidence="1">
    <location>
        <position position="409"/>
    </location>
    <ligand>
        <name>[4Fe-4S] cluster</name>
        <dbReference type="ChEBI" id="CHEBI:49883"/>
    </ligand>
</feature>
<feature type="binding site" evidence="1">
    <location>
        <position position="412"/>
    </location>
    <ligand>
        <name>[4Fe-4S] cluster</name>
        <dbReference type="ChEBI" id="CHEBI:49883"/>
    </ligand>
</feature>
<protein>
    <recommendedName>
        <fullName evidence="1">3-isopropylmalate dehydratase large subunit</fullName>
        <ecNumber evidence="1">4.2.1.33</ecNumber>
    </recommendedName>
    <alternativeName>
        <fullName evidence="1">Alpha-IPM isomerase</fullName>
        <shortName evidence="1">IPMI</shortName>
    </alternativeName>
    <alternativeName>
        <fullName evidence="1">Isopropylmalate isomerase</fullName>
    </alternativeName>
</protein>
<keyword id="KW-0004">4Fe-4S</keyword>
<keyword id="KW-0028">Amino-acid biosynthesis</keyword>
<keyword id="KW-0100">Branched-chain amino acid biosynthesis</keyword>
<keyword id="KW-0408">Iron</keyword>
<keyword id="KW-0411">Iron-sulfur</keyword>
<keyword id="KW-0432">Leucine biosynthesis</keyword>
<keyword id="KW-0456">Lyase</keyword>
<keyword id="KW-0479">Metal-binding</keyword>
<keyword id="KW-1185">Reference proteome</keyword>
<reference key="1">
    <citation type="journal article" date="2005" name="Proc. Natl. Acad. Sci. U.S.A.">
        <title>Complete genome sequence of Vibrio fischeri: a symbiotic bacterium with pathogenic congeners.</title>
        <authorList>
            <person name="Ruby E.G."/>
            <person name="Urbanowski M."/>
            <person name="Campbell J."/>
            <person name="Dunn A."/>
            <person name="Faini M."/>
            <person name="Gunsalus R."/>
            <person name="Lostroh P."/>
            <person name="Lupp C."/>
            <person name="McCann J."/>
            <person name="Millikan D."/>
            <person name="Schaefer A."/>
            <person name="Stabb E."/>
            <person name="Stevens A."/>
            <person name="Visick K."/>
            <person name="Whistler C."/>
            <person name="Greenberg E.P."/>
        </authorList>
    </citation>
    <scope>NUCLEOTIDE SEQUENCE [LARGE SCALE GENOMIC DNA]</scope>
    <source>
        <strain>ATCC 700601 / ES114</strain>
    </source>
</reference>